<proteinExistence type="inferred from homology"/>
<feature type="chain" id="PRO_0000066452" description="Protein ORF5 in retron Ec67">
    <location>
        <begin position="1"/>
        <end position="326"/>
    </location>
</feature>
<feature type="region of interest" description="Disordered" evidence="1">
    <location>
        <begin position="1"/>
        <end position="24"/>
    </location>
</feature>
<feature type="compositionally biased region" description="Polar residues" evidence="1">
    <location>
        <begin position="10"/>
        <end position="24"/>
    </location>
</feature>
<comment type="similarity">
    <text evidence="3">Belongs to the phage portal family. PBSX subfamily.</text>
</comment>
<evidence type="ECO:0000256" key="1">
    <source>
        <dbReference type="SAM" id="MobiDB-lite"/>
    </source>
</evidence>
<evidence type="ECO:0000303" key="2">
    <source>
    </source>
</evidence>
<evidence type="ECO:0000305" key="3"/>
<protein>
    <recommendedName>
        <fullName evidence="2">Protein ORF5 in retron Ec67</fullName>
    </recommendedName>
</protein>
<dbReference type="EMBL" id="M55249">
    <property type="protein sequence ID" value="AAA23404.1"/>
    <property type="molecule type" value="Genomic_DNA"/>
</dbReference>
<dbReference type="PIR" id="JQ0855">
    <property type="entry name" value="JQ0855"/>
</dbReference>
<dbReference type="eggNOG" id="COG4695">
    <property type="taxonomic scope" value="Bacteria"/>
</dbReference>
<dbReference type="InterPro" id="IPR030935">
    <property type="entry name" value="PBSX_Proteobac"/>
</dbReference>
<dbReference type="InterPro" id="IPR006944">
    <property type="entry name" value="Phage/GTA_portal"/>
</dbReference>
<dbReference type="InterPro" id="IPR006430">
    <property type="entry name" value="Phage_portal_PBSX"/>
</dbReference>
<dbReference type="NCBIfam" id="TIGR01540">
    <property type="entry name" value="portal_PBSX"/>
    <property type="match status" value="1"/>
</dbReference>
<dbReference type="Pfam" id="PF04860">
    <property type="entry name" value="Phage_portal"/>
    <property type="match status" value="1"/>
</dbReference>
<dbReference type="PIRSF" id="PIRSF018494">
    <property type="entry name" value="PBSX_VPQ"/>
    <property type="match status" value="1"/>
</dbReference>
<sequence>MGKSKKNRAAATNQLKHKSQTSAEAFSFGDPVPVLDRRELLDYVECVQTDRWYEPPVSFDGLARTFRAAVHHSSPIAVKCNILTSTYIPHPLLSQQAFSRFVQDYLVFGNAYLEKRTNRFGEVIALEPALAKYTRRGLDLDTYWFVQYGMTTQPYQFTKGSIFHLLEPDINQEIYGLPGYLSAIPSALLNESATLFRRKYYINGSHAGFIMYMTDAAQNQEDVNNLRNAMKSAKGPGNFRNLFMYSPNGKKDGLQIIPLSEVAAKDEFLNIKNVSRDDMMAAHRVPPQMMGIMPNNVRGVWGCGKSEFSVCEERINTLTEKDAGIK</sequence>
<organism>
    <name type="scientific">Escherichia coli</name>
    <dbReference type="NCBI Taxonomy" id="562"/>
    <lineage>
        <taxon>Bacteria</taxon>
        <taxon>Pseudomonadati</taxon>
        <taxon>Pseudomonadota</taxon>
        <taxon>Gammaproteobacteria</taxon>
        <taxon>Enterobacterales</taxon>
        <taxon>Enterobacteriaceae</taxon>
        <taxon>Escherichia</taxon>
    </lineage>
</organism>
<reference key="1">
    <citation type="journal article" date="1990" name="Proc. Natl. Acad. Sci. U.S.A.">
        <title>Retron for the 67-base multicopy single-stranded DNA from Escherichia coli: a potential transposable element encoding both reverse transcriptase and Dam methylase functions.</title>
        <authorList>
            <person name="Hsu M.-Y."/>
            <person name="Inouye M."/>
            <person name="Inouye S."/>
        </authorList>
    </citation>
    <scope>NUCLEOTIDE SEQUENCE [GENOMIC DNA]</scope>
    <source>
        <strain>O1:NM / CL-1</strain>
    </source>
</reference>
<accession>P21314</accession>
<name>YR75_ECOLX</name>
<keyword id="KW-0814">Transposable element</keyword>